<name>Y28_BPT7</name>
<protein>
    <recommendedName>
        <fullName>Protein 2.8</fullName>
    </recommendedName>
    <alternativeName>
        <fullName>Gene product 2.8</fullName>
        <shortName>Gp2.8</shortName>
    </alternativeName>
</protein>
<evidence type="ECO:0000305" key="1"/>
<organism>
    <name type="scientific">Escherichia phage T7</name>
    <name type="common">Bacteriophage T7</name>
    <dbReference type="NCBI Taxonomy" id="10760"/>
    <lineage>
        <taxon>Viruses</taxon>
        <taxon>Duplodnaviria</taxon>
        <taxon>Heunggongvirae</taxon>
        <taxon>Uroviricota</taxon>
        <taxon>Caudoviricetes</taxon>
        <taxon>Autographiviridae</taxon>
        <taxon>Studiervirinae</taxon>
        <taxon>Teseptimavirus</taxon>
        <taxon>Teseptimavirus T7</taxon>
    </lineage>
</organism>
<gene>
    <name type="ordered locus">2.8</name>
</gene>
<reference key="1">
    <citation type="journal article" date="1983" name="J. Mol. Biol.">
        <title>Complete nucleotide sequence of bacteriophage T7 DNA and the locations of T7 genetic elements.</title>
        <authorList>
            <person name="Dunn J.J."/>
            <person name="Studier F.W."/>
        </authorList>
    </citation>
    <scope>NUCLEOTIDE SEQUENCE [LARGE SCALE GENOMIC DNA]</scope>
</reference>
<reference key="2">
    <citation type="journal article" date="1981" name="J. Mol. Biol.">
        <title>Nucleotide sequence from the genetic left end of bacteriophage T7 DNA to the beginning of gene 4.</title>
        <authorList>
            <person name="Dunn J.J."/>
            <person name="Studier F.W."/>
        </authorList>
    </citation>
    <scope>NUCLEOTIDE SEQUENCE [GENOMIC DNA]</scope>
</reference>
<accession>P03795</accession>
<sequence>MELREKILERIKVTSSGCWEWQGATNNKGYGQVWCSNTGKVVYCHRVMSNAPKGSTVLHSCDNPLCCNPEHLSIGTPKENSTDMVNKGRSHKGYKLSDEDVMAIMESSESNVSLARTYGVSQQTICDIRKGRRHGRLRR</sequence>
<comment type="sequence caution" evidence="1">
    <conflict type="erroneous initiation">
        <sequence resource="EMBL-CDS" id="CAA24344"/>
    </conflict>
</comment>
<comment type="sequence caution" evidence="1">
    <conflict type="erroneous initiation">
        <sequence resource="EMBL-CDS" id="CAA24401"/>
    </conflict>
</comment>
<organismHost>
    <name type="scientific">Escherichia coli</name>
    <dbReference type="NCBI Taxonomy" id="562"/>
</organismHost>
<dbReference type="EMBL" id="V01146">
    <property type="protein sequence ID" value="CAA24401.1"/>
    <property type="status" value="ALT_INIT"/>
    <property type="molecule type" value="Genomic_DNA"/>
</dbReference>
<dbReference type="EMBL" id="V01127">
    <property type="protein sequence ID" value="CAA24344.1"/>
    <property type="status" value="ALT_INIT"/>
    <property type="molecule type" value="Genomic_DNA"/>
</dbReference>
<dbReference type="PIR" id="C43003">
    <property type="entry name" value="Q2BP87"/>
</dbReference>
<dbReference type="RefSeq" id="NP_041971.1">
    <property type="nucleotide sequence ID" value="NC_001604.1"/>
</dbReference>
<dbReference type="KEGG" id="vg:1261078"/>
<dbReference type="OrthoDB" id="21336at10239"/>
<dbReference type="Proteomes" id="UP000000840">
    <property type="component" value="Genome"/>
</dbReference>
<dbReference type="GO" id="GO:0004519">
    <property type="term" value="F:endonuclease activity"/>
    <property type="evidence" value="ECO:0007669"/>
    <property type="project" value="InterPro"/>
</dbReference>
<dbReference type="Gene3D" id="3.90.75.10">
    <property type="entry name" value="Homing Intron 3 (I-ppo) Encoded Endonuclease, Chain A"/>
    <property type="match status" value="1"/>
</dbReference>
<dbReference type="InterPro" id="IPR044925">
    <property type="entry name" value="His-Me_finger_sf"/>
</dbReference>
<dbReference type="InterPro" id="IPR003615">
    <property type="entry name" value="HNH_nuc"/>
</dbReference>
<dbReference type="InterPro" id="IPR044930">
    <property type="entry name" value="Homing_endonuclease_His-Me"/>
</dbReference>
<dbReference type="Pfam" id="PF13392">
    <property type="entry name" value="HNH_3"/>
    <property type="match status" value="1"/>
</dbReference>
<dbReference type="SUPFAM" id="SSF54060">
    <property type="entry name" value="His-Me finger endonucleases"/>
    <property type="match status" value="1"/>
</dbReference>
<feature type="chain" id="PRO_0000106484" description="Protein 2.8">
    <location>
        <begin position="1"/>
        <end position="139"/>
    </location>
</feature>
<proteinExistence type="predicted"/>
<keyword id="KW-1185">Reference proteome</keyword>